<organism>
    <name type="scientific">Oceanobacillus iheyensis (strain DSM 14371 / CIP 107618 / JCM 11309 / KCTC 3954 / HTE831)</name>
    <dbReference type="NCBI Taxonomy" id="221109"/>
    <lineage>
        <taxon>Bacteria</taxon>
        <taxon>Bacillati</taxon>
        <taxon>Bacillota</taxon>
        <taxon>Bacilli</taxon>
        <taxon>Bacillales</taxon>
        <taxon>Bacillaceae</taxon>
        <taxon>Oceanobacillus</taxon>
    </lineage>
</organism>
<evidence type="ECO:0000255" key="1">
    <source>
        <dbReference type="HAMAP-Rule" id="MF_00133"/>
    </source>
</evidence>
<keyword id="KW-0028">Amino-acid biosynthesis</keyword>
<keyword id="KW-0057">Aromatic amino acid biosynthesis</keyword>
<keyword id="KW-0456">Lyase</keyword>
<keyword id="KW-0663">Pyridoxal phosphate</keyword>
<keyword id="KW-1185">Reference proteome</keyword>
<keyword id="KW-0822">Tryptophan biosynthesis</keyword>
<comment type="function">
    <text evidence="1">The beta subunit is responsible for the synthesis of L-tryptophan from indole and L-serine.</text>
</comment>
<comment type="catalytic activity">
    <reaction evidence="1">
        <text>(1S,2R)-1-C-(indol-3-yl)glycerol 3-phosphate + L-serine = D-glyceraldehyde 3-phosphate + L-tryptophan + H2O</text>
        <dbReference type="Rhea" id="RHEA:10532"/>
        <dbReference type="ChEBI" id="CHEBI:15377"/>
        <dbReference type="ChEBI" id="CHEBI:33384"/>
        <dbReference type="ChEBI" id="CHEBI:57912"/>
        <dbReference type="ChEBI" id="CHEBI:58866"/>
        <dbReference type="ChEBI" id="CHEBI:59776"/>
        <dbReference type="EC" id="4.2.1.20"/>
    </reaction>
</comment>
<comment type="cofactor">
    <cofactor evidence="1">
        <name>pyridoxal 5'-phosphate</name>
        <dbReference type="ChEBI" id="CHEBI:597326"/>
    </cofactor>
</comment>
<comment type="pathway">
    <text evidence="1">Amino-acid biosynthesis; L-tryptophan biosynthesis; L-tryptophan from chorismate: step 5/5.</text>
</comment>
<comment type="subunit">
    <text evidence="1">Tetramer of two alpha and two beta chains.</text>
</comment>
<comment type="similarity">
    <text evidence="1">Belongs to the TrpB family.</text>
</comment>
<name>TRPB_OCEIH</name>
<reference key="1">
    <citation type="journal article" date="2002" name="Nucleic Acids Res.">
        <title>Genome sequence of Oceanobacillus iheyensis isolated from the Iheya Ridge and its unexpected adaptive capabilities to extreme environments.</title>
        <authorList>
            <person name="Takami H."/>
            <person name="Takaki Y."/>
            <person name="Uchiyama I."/>
        </authorList>
    </citation>
    <scope>NUCLEOTIDE SEQUENCE [LARGE SCALE GENOMIC DNA]</scope>
    <source>
        <strain>DSM 14371 / CIP 107618 / JCM 11309 / KCTC 3954 / HTE831</strain>
    </source>
</reference>
<dbReference type="EC" id="4.2.1.20" evidence="1"/>
<dbReference type="EMBL" id="BA000028">
    <property type="protein sequence ID" value="BAC12478.1"/>
    <property type="molecule type" value="Genomic_DNA"/>
</dbReference>
<dbReference type="RefSeq" id="WP_011064925.1">
    <property type="nucleotide sequence ID" value="NC_004193.1"/>
</dbReference>
<dbReference type="SMR" id="Q8ESU4"/>
<dbReference type="STRING" id="221109.gene:10732726"/>
<dbReference type="KEGG" id="oih:OB0522"/>
<dbReference type="eggNOG" id="COG0133">
    <property type="taxonomic scope" value="Bacteria"/>
</dbReference>
<dbReference type="HOGENOM" id="CLU_016734_3_1_9"/>
<dbReference type="OrthoDB" id="9766131at2"/>
<dbReference type="PhylomeDB" id="Q8ESU4"/>
<dbReference type="UniPathway" id="UPA00035">
    <property type="reaction ID" value="UER00044"/>
</dbReference>
<dbReference type="Proteomes" id="UP000000822">
    <property type="component" value="Chromosome"/>
</dbReference>
<dbReference type="GO" id="GO:0005737">
    <property type="term" value="C:cytoplasm"/>
    <property type="evidence" value="ECO:0007669"/>
    <property type="project" value="TreeGrafter"/>
</dbReference>
<dbReference type="GO" id="GO:0004834">
    <property type="term" value="F:tryptophan synthase activity"/>
    <property type="evidence" value="ECO:0007669"/>
    <property type="project" value="UniProtKB-UniRule"/>
</dbReference>
<dbReference type="CDD" id="cd06446">
    <property type="entry name" value="Trp-synth_B"/>
    <property type="match status" value="1"/>
</dbReference>
<dbReference type="FunFam" id="3.40.50.1100:FF:000001">
    <property type="entry name" value="Tryptophan synthase beta chain"/>
    <property type="match status" value="1"/>
</dbReference>
<dbReference type="FunFam" id="3.40.50.1100:FF:000004">
    <property type="entry name" value="Tryptophan synthase beta chain"/>
    <property type="match status" value="1"/>
</dbReference>
<dbReference type="Gene3D" id="3.40.50.1100">
    <property type="match status" value="2"/>
</dbReference>
<dbReference type="HAMAP" id="MF_00133">
    <property type="entry name" value="Trp_synth_beta"/>
    <property type="match status" value="1"/>
</dbReference>
<dbReference type="InterPro" id="IPR006653">
    <property type="entry name" value="Trp_synth_b_CS"/>
</dbReference>
<dbReference type="InterPro" id="IPR006654">
    <property type="entry name" value="Trp_synth_beta"/>
</dbReference>
<dbReference type="InterPro" id="IPR023026">
    <property type="entry name" value="Trp_synth_beta/beta-like"/>
</dbReference>
<dbReference type="InterPro" id="IPR001926">
    <property type="entry name" value="TrpB-like_PALP"/>
</dbReference>
<dbReference type="InterPro" id="IPR036052">
    <property type="entry name" value="TrpB-like_PALP_sf"/>
</dbReference>
<dbReference type="NCBIfam" id="TIGR00263">
    <property type="entry name" value="trpB"/>
    <property type="match status" value="1"/>
</dbReference>
<dbReference type="PANTHER" id="PTHR48077:SF3">
    <property type="entry name" value="TRYPTOPHAN SYNTHASE"/>
    <property type="match status" value="1"/>
</dbReference>
<dbReference type="PANTHER" id="PTHR48077">
    <property type="entry name" value="TRYPTOPHAN SYNTHASE-RELATED"/>
    <property type="match status" value="1"/>
</dbReference>
<dbReference type="Pfam" id="PF00291">
    <property type="entry name" value="PALP"/>
    <property type="match status" value="1"/>
</dbReference>
<dbReference type="PIRSF" id="PIRSF001413">
    <property type="entry name" value="Trp_syn_beta"/>
    <property type="match status" value="1"/>
</dbReference>
<dbReference type="SUPFAM" id="SSF53686">
    <property type="entry name" value="Tryptophan synthase beta subunit-like PLP-dependent enzymes"/>
    <property type="match status" value="1"/>
</dbReference>
<dbReference type="PROSITE" id="PS00168">
    <property type="entry name" value="TRP_SYNTHASE_BETA"/>
    <property type="match status" value="1"/>
</dbReference>
<protein>
    <recommendedName>
        <fullName evidence="1">Tryptophan synthase beta chain</fullName>
        <ecNumber evidence="1">4.2.1.20</ecNumber>
    </recommendedName>
</protein>
<sequence>MTTYSFPNTKGKYGEFGGRFVPELLMPAVLELEKAYEDALKDESFNEELQTYLTEYIGRETPLYHAKKLTEHAGGAQIYLKREDLNHTGAHKINNTIGQALLTLRMGKKKVVAETGAGQHGVATATVCSLLGLECIVFMGEEDIKRQKLNVFRMELLGAEVVSVSQGSGTLKDAVNEALRYWVNNVNDTHYIIGSVVGPHPFPKIVRDFQSVIGKETKEQSMKKIGSLPDAVVACVGGGSNAMGMFYPFIDDKEVTLFGVEAAGAGLDTKQHAATLTGGSPGMLHGTFTYLLQDDCGQIEEAFSISAGLDYPGIGPEHSHLHQTKRVTYSSITDEEALEAFQLLSKTEGIIPALESAHAVSYATKLAKEMNPEQSIVICLSGRGDKDVEQVKERLEGEQ</sequence>
<gene>
    <name evidence="1" type="primary">trpB</name>
    <name type="ordered locus">OB0522</name>
</gene>
<accession>Q8ESU4</accession>
<proteinExistence type="inferred from homology"/>
<feature type="chain" id="PRO_0000098975" description="Tryptophan synthase beta chain">
    <location>
        <begin position="1"/>
        <end position="399"/>
    </location>
</feature>
<feature type="modified residue" description="N6-(pyridoxal phosphate)lysine" evidence="1">
    <location>
        <position position="92"/>
    </location>
</feature>